<feature type="chain" id="PRO_1000215137" description="Urease accessory protein UreG">
    <location>
        <begin position="1"/>
        <end position="209"/>
    </location>
</feature>
<feature type="binding site" evidence="1">
    <location>
        <begin position="11"/>
        <end position="18"/>
    </location>
    <ligand>
        <name>GTP</name>
        <dbReference type="ChEBI" id="CHEBI:37565"/>
    </ligand>
</feature>
<proteinExistence type="inferred from homology"/>
<dbReference type="EMBL" id="CP001600">
    <property type="protein sequence ID" value="ACR69234.1"/>
    <property type="molecule type" value="Genomic_DNA"/>
</dbReference>
<dbReference type="RefSeq" id="WP_015871366.1">
    <property type="nucleotide sequence ID" value="NZ_CP169062.1"/>
</dbReference>
<dbReference type="SMR" id="C5BBR3"/>
<dbReference type="STRING" id="67780.B6E78_02920"/>
<dbReference type="GeneID" id="69538992"/>
<dbReference type="KEGG" id="eic:NT01EI_2058"/>
<dbReference type="HOGENOM" id="CLU_072144_1_0_6"/>
<dbReference type="OrthoDB" id="9802035at2"/>
<dbReference type="Proteomes" id="UP000001485">
    <property type="component" value="Chromosome"/>
</dbReference>
<dbReference type="GO" id="GO:0005737">
    <property type="term" value="C:cytoplasm"/>
    <property type="evidence" value="ECO:0007669"/>
    <property type="project" value="UniProtKB-SubCell"/>
</dbReference>
<dbReference type="GO" id="GO:0005525">
    <property type="term" value="F:GTP binding"/>
    <property type="evidence" value="ECO:0007669"/>
    <property type="project" value="UniProtKB-KW"/>
</dbReference>
<dbReference type="GO" id="GO:0003924">
    <property type="term" value="F:GTPase activity"/>
    <property type="evidence" value="ECO:0007669"/>
    <property type="project" value="InterPro"/>
</dbReference>
<dbReference type="GO" id="GO:0016151">
    <property type="term" value="F:nickel cation binding"/>
    <property type="evidence" value="ECO:0007669"/>
    <property type="project" value="UniProtKB-UniRule"/>
</dbReference>
<dbReference type="GO" id="GO:0043419">
    <property type="term" value="P:urea catabolic process"/>
    <property type="evidence" value="ECO:0007669"/>
    <property type="project" value="InterPro"/>
</dbReference>
<dbReference type="Gene3D" id="3.40.50.300">
    <property type="entry name" value="P-loop containing nucleotide triphosphate hydrolases"/>
    <property type="match status" value="1"/>
</dbReference>
<dbReference type="HAMAP" id="MF_01389">
    <property type="entry name" value="UreG"/>
    <property type="match status" value="1"/>
</dbReference>
<dbReference type="InterPro" id="IPR003495">
    <property type="entry name" value="CobW/HypB/UreG_nucleotide-bd"/>
</dbReference>
<dbReference type="InterPro" id="IPR027417">
    <property type="entry name" value="P-loop_NTPase"/>
</dbReference>
<dbReference type="InterPro" id="IPR004400">
    <property type="entry name" value="UreG"/>
</dbReference>
<dbReference type="NCBIfam" id="TIGR00101">
    <property type="entry name" value="ureG"/>
    <property type="match status" value="1"/>
</dbReference>
<dbReference type="PANTHER" id="PTHR31715">
    <property type="entry name" value="UREASE ACCESSORY PROTEIN G"/>
    <property type="match status" value="1"/>
</dbReference>
<dbReference type="PANTHER" id="PTHR31715:SF0">
    <property type="entry name" value="UREASE ACCESSORY PROTEIN G"/>
    <property type="match status" value="1"/>
</dbReference>
<dbReference type="Pfam" id="PF02492">
    <property type="entry name" value="cobW"/>
    <property type="match status" value="1"/>
</dbReference>
<dbReference type="PIRSF" id="PIRSF005624">
    <property type="entry name" value="Ni-bind_GTPase"/>
    <property type="match status" value="1"/>
</dbReference>
<dbReference type="SUPFAM" id="SSF52540">
    <property type="entry name" value="P-loop containing nucleoside triphosphate hydrolases"/>
    <property type="match status" value="1"/>
</dbReference>
<accession>C5BBR3</accession>
<sequence length="209" mass="22786">MKKIIRVGIGGPVGSGKTAIIEVITPRLMQRGIKPLIITNDIVTTEDAKQVKRTLKGILDEEKIVGVETGACPHTAVREDPSMNIAAVEELEARFPDSDVIMIESGGDNLTLTFSPALADFYIYVIDVAEGEKIPRKNGPGLVQADILVINKTDLAPYVGADLSVMESDTKVVRGDRPYVMTNCKTGEGVEELVDMIMRDFLFTHSEIK</sequence>
<reference key="1">
    <citation type="submission" date="2009-03" db="EMBL/GenBank/DDBJ databases">
        <title>Complete genome sequence of Edwardsiella ictaluri 93-146.</title>
        <authorList>
            <person name="Williams M.L."/>
            <person name="Gillaspy A.F."/>
            <person name="Dyer D.W."/>
            <person name="Thune R.L."/>
            <person name="Waldbieser G.C."/>
            <person name="Schuster S.C."/>
            <person name="Gipson J."/>
            <person name="Zaitshik J."/>
            <person name="Landry C."/>
            <person name="Lawrence M.L."/>
        </authorList>
    </citation>
    <scope>NUCLEOTIDE SEQUENCE [LARGE SCALE GENOMIC DNA]</scope>
    <source>
        <strain>93-146</strain>
    </source>
</reference>
<comment type="function">
    <text evidence="1">Facilitates the functional incorporation of the urease nickel metallocenter. This process requires GTP hydrolysis, probably effectuated by UreG.</text>
</comment>
<comment type="subunit">
    <text evidence="1">Homodimer. UreD, UreF and UreG form a complex that acts as a GTP-hydrolysis-dependent molecular chaperone, activating the urease apoprotein by helping to assemble the nickel containing metallocenter of UreC. The UreE protein probably delivers the nickel.</text>
</comment>
<comment type="subcellular location">
    <subcellularLocation>
        <location evidence="1">Cytoplasm</location>
    </subcellularLocation>
</comment>
<comment type="similarity">
    <text evidence="1">Belongs to the SIMIBI class G3E GTPase family. UreG subfamily.</text>
</comment>
<name>UREG_EDWI9</name>
<protein>
    <recommendedName>
        <fullName evidence="1">Urease accessory protein UreG</fullName>
    </recommendedName>
</protein>
<keyword id="KW-0143">Chaperone</keyword>
<keyword id="KW-0963">Cytoplasm</keyword>
<keyword id="KW-0342">GTP-binding</keyword>
<keyword id="KW-0996">Nickel insertion</keyword>
<keyword id="KW-0547">Nucleotide-binding</keyword>
<evidence type="ECO:0000255" key="1">
    <source>
        <dbReference type="HAMAP-Rule" id="MF_01389"/>
    </source>
</evidence>
<gene>
    <name evidence="1" type="primary">ureG</name>
    <name type="ordered locus">NT01EI_2058</name>
</gene>
<organism>
    <name type="scientific">Edwardsiella ictaluri (strain 93-146)</name>
    <dbReference type="NCBI Taxonomy" id="634503"/>
    <lineage>
        <taxon>Bacteria</taxon>
        <taxon>Pseudomonadati</taxon>
        <taxon>Pseudomonadota</taxon>
        <taxon>Gammaproteobacteria</taxon>
        <taxon>Enterobacterales</taxon>
        <taxon>Hafniaceae</taxon>
        <taxon>Edwardsiella</taxon>
    </lineage>
</organism>